<accession>Q6GZR4</accession>
<gene>
    <name type="ORF">FV3-061L</name>
</gene>
<reference key="1">
    <citation type="journal article" date="2004" name="Virology">
        <title>Comparative genomic analyses of frog virus 3, type species of the genus Ranavirus (family Iridoviridae).</title>
        <authorList>
            <person name="Tan W.G."/>
            <person name="Barkman T.J."/>
            <person name="Gregory Chinchar V."/>
            <person name="Essani K."/>
        </authorList>
    </citation>
    <scope>NUCLEOTIDE SEQUENCE [LARGE SCALE GENOMIC DNA]</scope>
</reference>
<organismHost>
    <name type="scientific">Dryophytes versicolor</name>
    <name type="common">chameleon treefrog</name>
    <dbReference type="NCBI Taxonomy" id="30343"/>
</organismHost>
<organismHost>
    <name type="scientific">Lithobates pipiens</name>
    <name type="common">Northern leopard frog</name>
    <name type="synonym">Rana pipiens</name>
    <dbReference type="NCBI Taxonomy" id="8404"/>
</organismHost>
<organismHost>
    <name type="scientific">Lithobates sylvaticus</name>
    <name type="common">Wood frog</name>
    <name type="synonym">Rana sylvatica</name>
    <dbReference type="NCBI Taxonomy" id="45438"/>
</organismHost>
<organismHost>
    <name type="scientific">Notophthalmus viridescens</name>
    <name type="common">Eastern newt</name>
    <name type="synonym">Triturus viridescens</name>
    <dbReference type="NCBI Taxonomy" id="8316"/>
</organismHost>
<name>061L_FRG3G</name>
<keyword id="KW-1185">Reference proteome</keyword>
<organism>
    <name type="scientific">Frog virus 3 (isolate Goorha)</name>
    <name type="common">FV-3</name>
    <dbReference type="NCBI Taxonomy" id="654924"/>
    <lineage>
        <taxon>Viruses</taxon>
        <taxon>Varidnaviria</taxon>
        <taxon>Bamfordvirae</taxon>
        <taxon>Nucleocytoviricota</taxon>
        <taxon>Megaviricetes</taxon>
        <taxon>Pimascovirales</taxon>
        <taxon>Iridoviridae</taxon>
        <taxon>Alphairidovirinae</taxon>
        <taxon>Ranavirus</taxon>
        <taxon>Frog virus 3</taxon>
    </lineage>
</organism>
<proteinExistence type="predicted"/>
<feature type="chain" id="PRO_0000410568" description="Uncharacterized protein 061L">
    <location>
        <begin position="1"/>
        <end position="60"/>
    </location>
</feature>
<dbReference type="EMBL" id="AY548484">
    <property type="protein sequence ID" value="AAT09721.1"/>
    <property type="molecule type" value="Genomic_DNA"/>
</dbReference>
<dbReference type="RefSeq" id="YP_031640.1">
    <property type="nucleotide sequence ID" value="NC_005946.1"/>
</dbReference>
<dbReference type="KEGG" id="vg:2947761"/>
<dbReference type="Proteomes" id="UP000008770">
    <property type="component" value="Segment"/>
</dbReference>
<protein>
    <recommendedName>
        <fullName>Uncharacterized protein 061L</fullName>
    </recommendedName>
</protein>
<sequence>MWRWSNIYRIGTLSRYYRYAEHSKDTTMSIFSGGVLPNTPSLEKSLYYDAFPYGLTCKNS</sequence>